<evidence type="ECO:0000250" key="1">
    <source>
        <dbReference type="UniProtKB" id="A6ZQI5"/>
    </source>
</evidence>
<evidence type="ECO:0000250" key="2">
    <source>
        <dbReference type="UniProtKB" id="P47008"/>
    </source>
</evidence>
<evidence type="ECO:0000255" key="3">
    <source>
        <dbReference type="PROSITE-ProRule" id="PRU00056"/>
    </source>
</evidence>
<evidence type="ECO:0000256" key="4">
    <source>
        <dbReference type="SAM" id="MobiDB-lite"/>
    </source>
</evidence>
<evidence type="ECO:0000305" key="5"/>
<organism>
    <name type="scientific">Coccidioides immitis (strain RS)</name>
    <name type="common">Valley fever fungus</name>
    <dbReference type="NCBI Taxonomy" id="246410"/>
    <lineage>
        <taxon>Eukaryota</taxon>
        <taxon>Fungi</taxon>
        <taxon>Dikarya</taxon>
        <taxon>Ascomycota</taxon>
        <taxon>Pezizomycotina</taxon>
        <taxon>Eurotiomycetes</taxon>
        <taxon>Eurotiomycetidae</taxon>
        <taxon>Onygenales</taxon>
        <taxon>Onygenaceae</taxon>
        <taxon>Coccidioides</taxon>
    </lineage>
</organism>
<feature type="chain" id="PRO_0000324976" description="Phosphatidylinositol transfer protein SFH5">
    <location>
        <begin position="1"/>
        <end position="457"/>
    </location>
</feature>
<feature type="domain" description="CRAL-TRIO" evidence="3">
    <location>
        <begin position="196"/>
        <end position="371"/>
    </location>
</feature>
<feature type="region of interest" description="Disordered" evidence="4">
    <location>
        <begin position="1"/>
        <end position="107"/>
    </location>
</feature>
<feature type="region of interest" description="Disordered" evidence="4">
    <location>
        <begin position="378"/>
        <end position="457"/>
    </location>
</feature>
<feature type="compositionally biased region" description="Polar residues" evidence="4">
    <location>
        <begin position="7"/>
        <end position="16"/>
    </location>
</feature>
<feature type="compositionally biased region" description="Basic and acidic residues" evidence="4">
    <location>
        <begin position="39"/>
        <end position="59"/>
    </location>
</feature>
<feature type="compositionally biased region" description="Basic and acidic residues" evidence="4">
    <location>
        <begin position="380"/>
        <end position="391"/>
    </location>
</feature>
<feature type="compositionally biased region" description="Basic and acidic residues" evidence="4">
    <location>
        <begin position="418"/>
        <end position="427"/>
    </location>
</feature>
<feature type="compositionally biased region" description="Low complexity" evidence="4">
    <location>
        <begin position="428"/>
        <end position="457"/>
    </location>
</feature>
<feature type="binding site" evidence="1">
    <location>
        <position position="221"/>
    </location>
    <ligand>
        <name>heme</name>
        <dbReference type="ChEBI" id="CHEBI:30413"/>
    </ligand>
</feature>
<feature type="binding site" evidence="1">
    <location>
        <position position="241"/>
    </location>
    <ligand>
        <name>heme</name>
        <dbReference type="ChEBI" id="CHEBI:30413"/>
    </ligand>
</feature>
<feature type="binding site" evidence="1">
    <location>
        <position position="275"/>
    </location>
    <ligand>
        <name>heme</name>
        <dbReference type="ChEBI" id="CHEBI:30413"/>
    </ligand>
</feature>
<feature type="binding site" description="proximal binding residue" evidence="1">
    <location>
        <position position="277"/>
    </location>
    <ligand>
        <name>heme</name>
        <dbReference type="ChEBI" id="CHEBI:30413"/>
    </ligand>
    <ligandPart>
        <name>Fe</name>
        <dbReference type="ChEBI" id="CHEBI:18248"/>
    </ligandPart>
</feature>
<feature type="binding site" evidence="1">
    <location>
        <position position="311"/>
    </location>
    <ligand>
        <name>heme</name>
        <dbReference type="ChEBI" id="CHEBI:30413"/>
    </ligand>
</feature>
<proteinExistence type="inferred from homology"/>
<gene>
    <name type="primary">SFH5</name>
    <name type="ORF">CIMG_06582</name>
</gene>
<accession>Q1DSY1</accession>
<accession>A0A0D6K9N9</accession>
<accession>J3K945</accession>
<sequence length="457" mass="49844">MEKVQEQPAQTLSETAEQPAERVVEQPQDSAATAAPPGDSKEAETEKPAEVAPKEDSKEAPAPPPAATTAATADDANSDIIEEVKDKAGANTQVADPKPQEPADTRPSYLVNNAALSQFFDRLAPIVEKAGHNEMWGVPLKDAQDAPTVNIMIKFLRANEGNVKLAEEQLVKALEWRKKMNPLALAESAAFPSSKFKGLGYITTYRDPTTEKNVVFTWNIYGSVKNVDLTFGNLEEFIKWRVALMELAIRELRLESATSVMDYNGEDPYQMIQVHDYQNVSFIRMNPNIRAASRETIEVFSTAYPELLKEKYFVNLPVVMGWVFTALKVFLSKNTIRKFHPITNGVNLAREFTTFGEEIPKTYGGKGDVLADSGRTVTLQDDKAPETKPEENGNASQAPEAEPASGNPAQTDATNGPAKDDAPKNDKPAVPTDTKTDAPADAPANTLADAPADSRPN</sequence>
<keyword id="KW-0963">Cytoplasm</keyword>
<keyword id="KW-0256">Endoplasmic reticulum</keyword>
<keyword id="KW-0349">Heme</keyword>
<keyword id="KW-0408">Iron</keyword>
<keyword id="KW-0445">Lipid transport</keyword>
<keyword id="KW-0472">Membrane</keyword>
<keyword id="KW-0479">Metal-binding</keyword>
<keyword id="KW-0492">Microsome</keyword>
<keyword id="KW-1185">Reference proteome</keyword>
<keyword id="KW-0813">Transport</keyword>
<reference key="1">
    <citation type="journal article" date="2009" name="Genome Res.">
        <title>Comparative genomic analyses of the human fungal pathogens Coccidioides and their relatives.</title>
        <authorList>
            <person name="Sharpton T.J."/>
            <person name="Stajich J.E."/>
            <person name="Rounsley S.D."/>
            <person name="Gardner M.J."/>
            <person name="Wortman J.R."/>
            <person name="Jordar V.S."/>
            <person name="Maiti R."/>
            <person name="Kodira C.D."/>
            <person name="Neafsey D.E."/>
            <person name="Zeng Q."/>
            <person name="Hung C.-Y."/>
            <person name="McMahan C."/>
            <person name="Muszewska A."/>
            <person name="Grynberg M."/>
            <person name="Mandel M.A."/>
            <person name="Kellner E.M."/>
            <person name="Barker B.M."/>
            <person name="Galgiani J.N."/>
            <person name="Orbach M.J."/>
            <person name="Kirkland T.N."/>
            <person name="Cole G.T."/>
            <person name="Henn M.R."/>
            <person name="Birren B.W."/>
            <person name="Taylor J.W."/>
        </authorList>
    </citation>
    <scope>NUCLEOTIDE SEQUENCE [LARGE SCALE GENOMIC DNA]</scope>
    <source>
        <strain>RS</strain>
    </source>
</reference>
<reference key="2">
    <citation type="journal article" date="2010" name="Genome Res.">
        <title>Population genomic sequencing of Coccidioides fungi reveals recent hybridization and transposon control.</title>
        <authorList>
            <person name="Neafsey D.E."/>
            <person name="Barker B.M."/>
            <person name="Sharpton T.J."/>
            <person name="Stajich J.E."/>
            <person name="Park D.J."/>
            <person name="Whiston E."/>
            <person name="Hung C.-Y."/>
            <person name="McMahan C."/>
            <person name="White J."/>
            <person name="Sykes S."/>
            <person name="Heiman D."/>
            <person name="Young S."/>
            <person name="Zeng Q."/>
            <person name="Abouelleil A."/>
            <person name="Aftuck L."/>
            <person name="Bessette D."/>
            <person name="Brown A."/>
            <person name="FitzGerald M."/>
            <person name="Lui A."/>
            <person name="Macdonald J.P."/>
            <person name="Priest M."/>
            <person name="Orbach M.J."/>
            <person name="Galgiani J.N."/>
            <person name="Kirkland T.N."/>
            <person name="Cole G.T."/>
            <person name="Birren B.W."/>
            <person name="Henn M.R."/>
            <person name="Taylor J.W."/>
            <person name="Rounsley S.D."/>
        </authorList>
    </citation>
    <scope>GENOME REANNOTATION</scope>
    <source>
        <strain>RS</strain>
    </source>
</reference>
<name>SFH5_COCIM</name>
<protein>
    <recommendedName>
        <fullName>Phosphatidylinositol transfer protein SFH5</fullName>
        <shortName>PITP SFH5</shortName>
    </recommendedName>
</protein>
<comment type="function">
    <text evidence="2">Non-classical phosphatidylinositol (PtdIns) transfer protein (PITP), which exhibits PtdIns-binding/transfer activity in the absence of detectable PtdCho-binding/transfer activity. Regulates PtdIns(4,5)P2 homeostasis at the plasma membrane. Heme-binding protein that may play a role in organic oxidant-induced stress responses.</text>
</comment>
<comment type="catalytic activity">
    <reaction evidence="2">
        <text>a 1,2-diacyl-sn-glycero-3-phospho-(1D-myo-inositol)(in) = a 1,2-diacyl-sn-glycero-3-phospho-(1D-myo-inositol)(out)</text>
        <dbReference type="Rhea" id="RHEA:38691"/>
        <dbReference type="ChEBI" id="CHEBI:57880"/>
    </reaction>
    <physiologicalReaction direction="left-to-right" evidence="2">
        <dbReference type="Rhea" id="RHEA:38692"/>
    </physiologicalReaction>
</comment>
<comment type="cofactor">
    <cofactor evidence="1">
        <name>heme b</name>
        <dbReference type="ChEBI" id="CHEBI:60344"/>
    </cofactor>
</comment>
<comment type="subcellular location">
    <subcellularLocation>
        <location evidence="2">Cytoplasm</location>
    </subcellularLocation>
    <subcellularLocation>
        <location evidence="2">Endoplasmic reticulum membrane</location>
        <topology evidence="2">Peripheral membrane protein</topology>
    </subcellularLocation>
    <subcellularLocation>
        <location evidence="2">Microsome membrane</location>
        <topology evidence="2">Peripheral membrane protein</topology>
    </subcellularLocation>
</comment>
<comment type="similarity">
    <text evidence="5">Belongs to the SFH5 family.</text>
</comment>
<dbReference type="EMBL" id="GG704912">
    <property type="protein sequence ID" value="EAS31103.1"/>
    <property type="molecule type" value="Genomic_DNA"/>
</dbReference>
<dbReference type="RefSeq" id="XP_001242686.1">
    <property type="nucleotide sequence ID" value="XM_001242685.2"/>
</dbReference>
<dbReference type="SMR" id="Q1DSY1"/>
<dbReference type="FunCoup" id="Q1DSY1">
    <property type="interactions" value="36"/>
</dbReference>
<dbReference type="STRING" id="246410.Q1DSY1"/>
<dbReference type="GeneID" id="4560896"/>
<dbReference type="KEGG" id="cim:CIMG_06582"/>
<dbReference type="VEuPathDB" id="FungiDB:CIMG_06582"/>
<dbReference type="InParanoid" id="Q1DSY1"/>
<dbReference type="OMA" id="KFIRARE"/>
<dbReference type="OrthoDB" id="75724at2759"/>
<dbReference type="Proteomes" id="UP000001261">
    <property type="component" value="Unassembled WGS sequence"/>
</dbReference>
<dbReference type="GO" id="GO:0032541">
    <property type="term" value="C:cortical endoplasmic reticulum"/>
    <property type="evidence" value="ECO:0007669"/>
    <property type="project" value="TreeGrafter"/>
</dbReference>
<dbReference type="GO" id="GO:0005829">
    <property type="term" value="C:cytosol"/>
    <property type="evidence" value="ECO:0007669"/>
    <property type="project" value="TreeGrafter"/>
</dbReference>
<dbReference type="GO" id="GO:0005789">
    <property type="term" value="C:endoplasmic reticulum membrane"/>
    <property type="evidence" value="ECO:0007669"/>
    <property type="project" value="UniProtKB-SubCell"/>
</dbReference>
<dbReference type="GO" id="GO:0005886">
    <property type="term" value="C:plasma membrane"/>
    <property type="evidence" value="ECO:0007669"/>
    <property type="project" value="TreeGrafter"/>
</dbReference>
<dbReference type="GO" id="GO:0046872">
    <property type="term" value="F:metal ion binding"/>
    <property type="evidence" value="ECO:0007669"/>
    <property type="project" value="UniProtKB-KW"/>
</dbReference>
<dbReference type="GO" id="GO:0008526">
    <property type="term" value="F:phosphatidylinositol transfer activity"/>
    <property type="evidence" value="ECO:0007669"/>
    <property type="project" value="InterPro"/>
</dbReference>
<dbReference type="GO" id="GO:0043001">
    <property type="term" value="P:Golgi to plasma membrane protein transport"/>
    <property type="evidence" value="ECO:0007669"/>
    <property type="project" value="TreeGrafter"/>
</dbReference>
<dbReference type="GO" id="GO:0017157">
    <property type="term" value="P:regulation of exocytosis"/>
    <property type="evidence" value="ECO:0007669"/>
    <property type="project" value="TreeGrafter"/>
</dbReference>
<dbReference type="CDD" id="cd00170">
    <property type="entry name" value="SEC14"/>
    <property type="match status" value="1"/>
</dbReference>
<dbReference type="FunFam" id="3.40.525.10:FF:000017">
    <property type="entry name" value="Phosphatidylinositol transfer protein sfh5"/>
    <property type="match status" value="1"/>
</dbReference>
<dbReference type="Gene3D" id="3.40.525.10">
    <property type="entry name" value="CRAL-TRIO lipid binding domain"/>
    <property type="match status" value="1"/>
</dbReference>
<dbReference type="InterPro" id="IPR001251">
    <property type="entry name" value="CRAL-TRIO_dom"/>
</dbReference>
<dbReference type="InterPro" id="IPR036865">
    <property type="entry name" value="CRAL-TRIO_dom_sf"/>
</dbReference>
<dbReference type="InterPro" id="IPR011074">
    <property type="entry name" value="CRAL/TRIO_N_dom"/>
</dbReference>
<dbReference type="InterPro" id="IPR036273">
    <property type="entry name" value="CRAL/TRIO_N_dom_sf"/>
</dbReference>
<dbReference type="InterPro" id="IPR042938">
    <property type="entry name" value="Sfh5"/>
</dbReference>
<dbReference type="PANTHER" id="PTHR47669">
    <property type="entry name" value="PHOSPHATIDYLINOSITOL TRANSFER PROTEIN SFH5"/>
    <property type="match status" value="1"/>
</dbReference>
<dbReference type="PANTHER" id="PTHR47669:SF1">
    <property type="entry name" value="PHOSPHATIDYLINOSITOL TRANSFER PROTEIN SFH5"/>
    <property type="match status" value="1"/>
</dbReference>
<dbReference type="Pfam" id="PF00650">
    <property type="entry name" value="CRAL_TRIO"/>
    <property type="match status" value="1"/>
</dbReference>
<dbReference type="Pfam" id="PF03765">
    <property type="entry name" value="CRAL_TRIO_N"/>
    <property type="match status" value="1"/>
</dbReference>
<dbReference type="SMART" id="SM00516">
    <property type="entry name" value="SEC14"/>
    <property type="match status" value="1"/>
</dbReference>
<dbReference type="SUPFAM" id="SSF52087">
    <property type="entry name" value="CRAL/TRIO domain"/>
    <property type="match status" value="1"/>
</dbReference>
<dbReference type="SUPFAM" id="SSF46938">
    <property type="entry name" value="CRAL/TRIO N-terminal domain"/>
    <property type="match status" value="1"/>
</dbReference>
<dbReference type="PROSITE" id="PS50191">
    <property type="entry name" value="CRAL_TRIO"/>
    <property type="match status" value="1"/>
</dbReference>